<proteinExistence type="evidence at protein level"/>
<gene>
    <name type="primary">RTM1</name>
    <name type="synonym">JAL1</name>
    <name type="ordered locus">At1g05760</name>
    <name type="ORF">T20M3.2</name>
</gene>
<sequence length="174" mass="19200">MKIGPVGKHDARSTTIVNWDEGSHDGFISQIFLSHGVAGIMSIQFQFVMDGKLVLSDRHGPFSGNMFDVIELNYPHEYITGISGEYYKYEANNPHMRSLKFNTNTSEYGPFGTSGSSNDKFAFKLGKSPQFGGFHGTYDASGLQYIGVYLRPKTVLPKIDTGNAEETESKIVLG</sequence>
<evidence type="ECO:0000255" key="1">
    <source>
        <dbReference type="PROSITE-ProRule" id="PRU01088"/>
    </source>
</evidence>
<evidence type="ECO:0000269" key="2">
    <source>
    </source>
</evidence>
<evidence type="ECO:0000269" key="3">
    <source>
    </source>
</evidence>
<evidence type="ECO:0000269" key="4">
    <source>
    </source>
</evidence>
<evidence type="ECO:0000269" key="5">
    <source>
    </source>
</evidence>
<evidence type="ECO:0000269" key="6">
    <source>
    </source>
</evidence>
<evidence type="ECO:0000269" key="7">
    <source>
    </source>
</evidence>
<evidence type="ECO:0000269" key="8">
    <source>
    </source>
</evidence>
<evidence type="ECO:0000269" key="9">
    <source>
    </source>
</evidence>
<evidence type="ECO:0000269" key="10">
    <source>
    </source>
</evidence>
<evidence type="ECO:0000305" key="11"/>
<keyword id="KW-0963">Cytoplasm</keyword>
<keyword id="KW-0430">Lectin</keyword>
<keyword id="KW-0611">Plant defense</keyword>
<keyword id="KW-1185">Reference proteome</keyword>
<name>JAL1_ARATH</name>
<protein>
    <recommendedName>
        <fullName>Protein RESTRICTED TEV MOVEMENT 1</fullName>
    </recommendedName>
    <alternativeName>
        <fullName>Jacalin-related lectin 1</fullName>
    </alternativeName>
    <alternativeName>
        <fullName>Restricted tobacco etch virus movement protein 1</fullName>
    </alternativeName>
</protein>
<organism>
    <name type="scientific">Arabidopsis thaliana</name>
    <name type="common">Mouse-ear cress</name>
    <dbReference type="NCBI Taxonomy" id="3702"/>
    <lineage>
        <taxon>Eukaryota</taxon>
        <taxon>Viridiplantae</taxon>
        <taxon>Streptophyta</taxon>
        <taxon>Embryophyta</taxon>
        <taxon>Tracheophyta</taxon>
        <taxon>Spermatophyta</taxon>
        <taxon>Magnoliopsida</taxon>
        <taxon>eudicotyledons</taxon>
        <taxon>Gunneridae</taxon>
        <taxon>Pentapetalae</taxon>
        <taxon>rosids</taxon>
        <taxon>malvids</taxon>
        <taxon>Brassicales</taxon>
        <taxon>Brassicaceae</taxon>
        <taxon>Camelineae</taxon>
        <taxon>Arabidopsis</taxon>
    </lineage>
</organism>
<accession>Q9SE37</accession>
<accession>Q94K20</accession>
<dbReference type="EMBL" id="AF191302">
    <property type="protein sequence ID" value="AAF14583.1"/>
    <property type="molecule type" value="Genomic_DNA"/>
</dbReference>
<dbReference type="EMBL" id="GU396156">
    <property type="protein sequence ID" value="ADE43047.1"/>
    <property type="molecule type" value="Genomic_DNA"/>
</dbReference>
<dbReference type="EMBL" id="GU396157">
    <property type="protein sequence ID" value="ADE43048.1"/>
    <property type="molecule type" value="Genomic_DNA"/>
</dbReference>
<dbReference type="EMBL" id="GU396159">
    <property type="protein sequence ID" value="ADE43050.1"/>
    <property type="molecule type" value="Genomic_DNA"/>
</dbReference>
<dbReference type="EMBL" id="GU396160">
    <property type="protein sequence ID" value="ADE43051.1"/>
    <property type="molecule type" value="Genomic_DNA"/>
</dbReference>
<dbReference type="EMBL" id="GU396161">
    <property type="protein sequence ID" value="ADE43052.1"/>
    <property type="molecule type" value="Genomic_DNA"/>
</dbReference>
<dbReference type="EMBL" id="GU396163">
    <property type="protein sequence ID" value="ADE43054.1"/>
    <property type="molecule type" value="Genomic_DNA"/>
</dbReference>
<dbReference type="EMBL" id="GU396164">
    <property type="protein sequence ID" value="ADE43055.1"/>
    <property type="molecule type" value="Genomic_DNA"/>
</dbReference>
<dbReference type="EMBL" id="GU396165">
    <property type="protein sequence ID" value="ADE43056.1"/>
    <property type="molecule type" value="Genomic_DNA"/>
</dbReference>
<dbReference type="EMBL" id="GU396166">
    <property type="protein sequence ID" value="ADE43057.1"/>
    <property type="molecule type" value="Genomic_DNA"/>
</dbReference>
<dbReference type="EMBL" id="GU396167">
    <property type="protein sequence ID" value="ADE43058.1"/>
    <property type="molecule type" value="Genomic_DNA"/>
</dbReference>
<dbReference type="EMBL" id="GU396168">
    <property type="protein sequence ID" value="ADE43059.1"/>
    <property type="molecule type" value="Genomic_DNA"/>
</dbReference>
<dbReference type="EMBL" id="GU396169">
    <property type="protein sequence ID" value="ADE43060.1"/>
    <property type="molecule type" value="Genomic_DNA"/>
</dbReference>
<dbReference type="EMBL" id="GU396171">
    <property type="protein sequence ID" value="ADE43062.1"/>
    <property type="molecule type" value="Genomic_DNA"/>
</dbReference>
<dbReference type="EMBL" id="GU396172">
    <property type="protein sequence ID" value="ADE43063.1"/>
    <property type="molecule type" value="Genomic_DNA"/>
</dbReference>
<dbReference type="EMBL" id="GU396173">
    <property type="protein sequence ID" value="ADE43064.1"/>
    <property type="molecule type" value="Genomic_DNA"/>
</dbReference>
<dbReference type="EMBL" id="GU396174">
    <property type="protein sequence ID" value="ADE43065.1"/>
    <property type="molecule type" value="Genomic_DNA"/>
</dbReference>
<dbReference type="EMBL" id="GU396177">
    <property type="protein sequence ID" value="ADE43067.1"/>
    <property type="molecule type" value="Genomic_DNA"/>
</dbReference>
<dbReference type="EMBL" id="GU396178">
    <property type="protein sequence ID" value="ADE43068.1"/>
    <property type="molecule type" value="Genomic_DNA"/>
</dbReference>
<dbReference type="EMBL" id="GU396179">
    <property type="protein sequence ID" value="ADE43069.1"/>
    <property type="molecule type" value="Genomic_DNA"/>
</dbReference>
<dbReference type="EMBL" id="GU396180">
    <property type="protein sequence ID" value="ADE43070.1"/>
    <property type="molecule type" value="Genomic_DNA"/>
</dbReference>
<dbReference type="EMBL" id="GU396181">
    <property type="protein sequence ID" value="ADE43071.1"/>
    <property type="molecule type" value="Genomic_DNA"/>
</dbReference>
<dbReference type="EMBL" id="GU396182">
    <property type="protein sequence ID" value="ADE43072.1"/>
    <property type="molecule type" value="Genomic_DNA"/>
</dbReference>
<dbReference type="EMBL" id="FR681968">
    <property type="protein sequence ID" value="CBW45825.1"/>
    <property type="molecule type" value="Genomic_DNA"/>
</dbReference>
<dbReference type="EMBL" id="FR681969">
    <property type="protein sequence ID" value="CBW45826.1"/>
    <property type="molecule type" value="Genomic_DNA"/>
</dbReference>
<dbReference type="EMBL" id="FR681971">
    <property type="protein sequence ID" value="CBW45828.1"/>
    <property type="molecule type" value="Genomic_DNA"/>
</dbReference>
<dbReference type="EMBL" id="FR681973">
    <property type="protein sequence ID" value="CBW45830.1"/>
    <property type="molecule type" value="Genomic_DNA"/>
</dbReference>
<dbReference type="EMBL" id="FR681974">
    <property type="protein sequence ID" value="CBW45831.1"/>
    <property type="molecule type" value="Genomic_DNA"/>
</dbReference>
<dbReference type="EMBL" id="FR681975">
    <property type="protein sequence ID" value="CBW45832.1"/>
    <property type="molecule type" value="Genomic_DNA"/>
</dbReference>
<dbReference type="EMBL" id="FR681976">
    <property type="protein sequence ID" value="CBW45833.1"/>
    <property type="molecule type" value="Genomic_DNA"/>
</dbReference>
<dbReference type="EMBL" id="FR681977">
    <property type="protein sequence ID" value="CBW45834.1"/>
    <property type="molecule type" value="Genomic_DNA"/>
</dbReference>
<dbReference type="EMBL" id="FR681978">
    <property type="protein sequence ID" value="CBW45835.1"/>
    <property type="molecule type" value="Genomic_DNA"/>
</dbReference>
<dbReference type="EMBL" id="FR681980">
    <property type="protein sequence ID" value="CBW45837.1"/>
    <property type="molecule type" value="Genomic_DNA"/>
</dbReference>
<dbReference type="EMBL" id="FR681981">
    <property type="protein sequence ID" value="CBW45838.1"/>
    <property type="molecule type" value="Genomic_DNA"/>
</dbReference>
<dbReference type="EMBL" id="FR681982">
    <property type="protein sequence ID" value="CBW45839.1"/>
    <property type="molecule type" value="Genomic_DNA"/>
</dbReference>
<dbReference type="EMBL" id="FR681983">
    <property type="protein sequence ID" value="CBW45840.1"/>
    <property type="molecule type" value="Genomic_DNA"/>
</dbReference>
<dbReference type="EMBL" id="FR681984">
    <property type="protein sequence ID" value="CBW45841.1"/>
    <property type="molecule type" value="Genomic_DNA"/>
</dbReference>
<dbReference type="EMBL" id="FR681985">
    <property type="protein sequence ID" value="CBW45842.1"/>
    <property type="molecule type" value="Genomic_DNA"/>
</dbReference>
<dbReference type="EMBL" id="FR681986">
    <property type="protein sequence ID" value="CBW45843.1"/>
    <property type="molecule type" value="Genomic_DNA"/>
</dbReference>
<dbReference type="EMBL" id="FR681987">
    <property type="protein sequence ID" value="CBW45844.1"/>
    <property type="molecule type" value="Genomic_DNA"/>
</dbReference>
<dbReference type="EMBL" id="FR681988">
    <property type="protein sequence ID" value="CBW45845.1"/>
    <property type="molecule type" value="Genomic_DNA"/>
</dbReference>
<dbReference type="EMBL" id="FR681989">
    <property type="protein sequence ID" value="CBW45846.1"/>
    <property type="molecule type" value="Genomic_DNA"/>
</dbReference>
<dbReference type="EMBL" id="FR681990">
    <property type="protein sequence ID" value="CBW45847.1"/>
    <property type="molecule type" value="Genomic_DNA"/>
</dbReference>
<dbReference type="EMBL" id="FR681991">
    <property type="protein sequence ID" value="CBW45848.1"/>
    <property type="molecule type" value="Genomic_DNA"/>
</dbReference>
<dbReference type="EMBL" id="FR681992">
    <property type="protein sequence ID" value="CBW45849.1"/>
    <property type="molecule type" value="Genomic_DNA"/>
</dbReference>
<dbReference type="EMBL" id="FR681995">
    <property type="protein sequence ID" value="CBW45852.1"/>
    <property type="molecule type" value="Genomic_DNA"/>
</dbReference>
<dbReference type="EMBL" id="FR681996">
    <property type="protein sequence ID" value="CBW45853.1"/>
    <property type="molecule type" value="Genomic_DNA"/>
</dbReference>
<dbReference type="EMBL" id="FR681997">
    <property type="protein sequence ID" value="CBW45854.1"/>
    <property type="molecule type" value="Genomic_DNA"/>
</dbReference>
<dbReference type="EMBL" id="FR681998">
    <property type="protein sequence ID" value="CBW45855.1"/>
    <property type="molecule type" value="Genomic_DNA"/>
</dbReference>
<dbReference type="EMBL" id="AC009999">
    <property type="protein sequence ID" value="AAF29382.1"/>
    <property type="molecule type" value="Genomic_DNA"/>
</dbReference>
<dbReference type="EMBL" id="CP002684">
    <property type="protein sequence ID" value="AEE27888.1"/>
    <property type="molecule type" value="Genomic_DNA"/>
</dbReference>
<dbReference type="EMBL" id="AF370465">
    <property type="protein sequence ID" value="AAK43842.1"/>
    <property type="molecule type" value="mRNA"/>
</dbReference>
<dbReference type="EMBL" id="AY064681">
    <property type="protein sequence ID" value="AAL47386.1"/>
    <property type="molecule type" value="mRNA"/>
</dbReference>
<dbReference type="PIR" id="A86192">
    <property type="entry name" value="A86192"/>
</dbReference>
<dbReference type="RefSeq" id="NP_172067.1">
    <property type="nucleotide sequence ID" value="NM_100456.3"/>
</dbReference>
<dbReference type="SMR" id="Q9SE37"/>
<dbReference type="BioGRID" id="22326">
    <property type="interactions" value="2"/>
</dbReference>
<dbReference type="FunCoup" id="Q9SE37">
    <property type="interactions" value="6"/>
</dbReference>
<dbReference type="IntAct" id="Q9SE37">
    <property type="interactions" value="1"/>
</dbReference>
<dbReference type="STRING" id="3702.Q9SE37"/>
<dbReference type="PaxDb" id="3702-AT1G05760.1"/>
<dbReference type="ProteomicsDB" id="232286"/>
<dbReference type="EnsemblPlants" id="AT1G05760.1">
    <property type="protein sequence ID" value="AT1G05760.1"/>
    <property type="gene ID" value="AT1G05760"/>
</dbReference>
<dbReference type="GeneID" id="837084"/>
<dbReference type="Gramene" id="AT1G05760.1">
    <property type="protein sequence ID" value="AT1G05760.1"/>
    <property type="gene ID" value="AT1G05760"/>
</dbReference>
<dbReference type="KEGG" id="ath:AT1G05760"/>
<dbReference type="Araport" id="AT1G05760"/>
<dbReference type="TAIR" id="AT1G05760">
    <property type="gene designation" value="RTM1"/>
</dbReference>
<dbReference type="eggNOG" id="ENOG502S91T">
    <property type="taxonomic scope" value="Eukaryota"/>
</dbReference>
<dbReference type="HOGENOM" id="CLU_076205_1_0_1"/>
<dbReference type="InParanoid" id="Q9SE37"/>
<dbReference type="PhylomeDB" id="Q9SE37"/>
<dbReference type="PRO" id="PR:Q9SE37"/>
<dbReference type="Proteomes" id="UP000006548">
    <property type="component" value="Chromosome 1"/>
</dbReference>
<dbReference type="ExpressionAtlas" id="Q9SE37">
    <property type="expression patterns" value="baseline and differential"/>
</dbReference>
<dbReference type="GO" id="GO:0005737">
    <property type="term" value="C:cytoplasm"/>
    <property type="evidence" value="ECO:0000314"/>
    <property type="project" value="UniProtKB"/>
</dbReference>
<dbReference type="GO" id="GO:0030246">
    <property type="term" value="F:carbohydrate binding"/>
    <property type="evidence" value="ECO:0007669"/>
    <property type="project" value="UniProtKB-KW"/>
</dbReference>
<dbReference type="GO" id="GO:0051607">
    <property type="term" value="P:defense response to virus"/>
    <property type="evidence" value="ECO:0000315"/>
    <property type="project" value="UniProtKB"/>
</dbReference>
<dbReference type="GO" id="GO:0009615">
    <property type="term" value="P:response to virus"/>
    <property type="evidence" value="ECO:0000315"/>
    <property type="project" value="TAIR"/>
</dbReference>
<dbReference type="GO" id="GO:0046741">
    <property type="term" value="P:transport of virus in host, tissue to tissue"/>
    <property type="evidence" value="ECO:0000314"/>
    <property type="project" value="UniProtKB"/>
</dbReference>
<dbReference type="CDD" id="cd09612">
    <property type="entry name" value="Jacalin"/>
    <property type="match status" value="1"/>
</dbReference>
<dbReference type="FunFam" id="2.100.10.30:FF:000009">
    <property type="entry name" value="Protein RESTRICTED TEV MOVEMENT 1"/>
    <property type="match status" value="1"/>
</dbReference>
<dbReference type="Gene3D" id="2.100.10.30">
    <property type="entry name" value="Jacalin-like lectin domain"/>
    <property type="match status" value="1"/>
</dbReference>
<dbReference type="InterPro" id="IPR001229">
    <property type="entry name" value="Jacalin-like_lectin_dom"/>
</dbReference>
<dbReference type="InterPro" id="IPR033734">
    <property type="entry name" value="Jacalin-like_lectin_dom_plant"/>
</dbReference>
<dbReference type="InterPro" id="IPR036404">
    <property type="entry name" value="Jacalin-like_lectin_dom_sf"/>
</dbReference>
<dbReference type="PANTHER" id="PTHR47293:SF80">
    <property type="entry name" value="JACALIN-RELATED LECTIN 2-RELATED"/>
    <property type="match status" value="1"/>
</dbReference>
<dbReference type="PANTHER" id="PTHR47293">
    <property type="entry name" value="JACALIN-RELATED LECTIN 3"/>
    <property type="match status" value="1"/>
</dbReference>
<dbReference type="Pfam" id="PF01419">
    <property type="entry name" value="Jacalin"/>
    <property type="match status" value="1"/>
</dbReference>
<dbReference type="SMART" id="SM00915">
    <property type="entry name" value="Jacalin"/>
    <property type="match status" value="1"/>
</dbReference>
<dbReference type="SUPFAM" id="SSF51101">
    <property type="entry name" value="Mannose-binding lectins"/>
    <property type="match status" value="1"/>
</dbReference>
<dbReference type="PROSITE" id="PS51752">
    <property type="entry name" value="JACALIN_LECTIN"/>
    <property type="match status" value="1"/>
</dbReference>
<feature type="chain" id="PRO_0000429162" description="Protein RESTRICTED TEV MOVEMENT 1">
    <location>
        <begin position="1"/>
        <end position="174"/>
    </location>
</feature>
<feature type="domain" description="Jacalin-type lectin" evidence="1">
    <location>
        <begin position="1"/>
        <end position="152"/>
    </location>
</feature>
<feature type="mutagenesis site" description="In rtm1-2; susceptible to systemic infection by tobacco etch virus (TEV)." evidence="2">
    <original>S</original>
    <variation>F</variation>
    <location>
        <position position="56"/>
    </location>
</feature>
<feature type="mutagenesis site" description="In rtm1-5; susceptible to systemic infection by tobacco etch virus (TEV)." evidence="2">
    <original>G</original>
    <variation>D</variation>
    <location>
        <position position="132"/>
    </location>
</feature>
<feature type="mutagenesis site" description="In rtm1-1; susceptible to systemic infection by tobacco etch virus (TEV)." evidence="2">
    <original>D</original>
    <variation>N</variation>
    <location>
        <position position="139"/>
    </location>
</feature>
<feature type="sequence conflict" description="In Ref. 6; AAK43842/AAL47386." evidence="11" ref="6">
    <original>D</original>
    <variation>G</variation>
    <location>
        <position position="20"/>
    </location>
</feature>
<comment type="function">
    <text evidence="2 3 5 7 9 10">Required for the restriction of long-distance movement of the pathogenic tobacco etch virus (TEV) without causing a hypersensitive response or inducing systemic acquired resistance.</text>
</comment>
<comment type="subunit">
    <text evidence="4 6">Self-interacts. Interacts with RTM3.</text>
</comment>
<comment type="subcellular location">
    <subcellularLocation>
        <location evidence="4">Cytoplasm</location>
    </subcellularLocation>
    <text>Soluble protein present in sieve elements in a punctate pattern of 1 to 2 um spheres.</text>
</comment>
<comment type="tissue specificity">
    <text evidence="4 8">Expressed at low levels exclusively in phloem-associated cells (e.g. sieve elements and adjacent cells).</text>
</comment>
<comment type="induction">
    <text evidence="8">Regulated by the transcription factors NAC045 and NAC086.</text>
</comment>
<comment type="disruption phenotype">
    <text evidence="2 10">Susceptible to systemic infection by tobacco etch virus (TEV).</text>
</comment>
<comment type="similarity">
    <text evidence="1 11">Belongs to the jacalin lectin family.</text>
</comment>
<comment type="caution">
    <text evidence="11">Has been shown to be inactive in cv. Ler-2 (AC D9UBI3) and cv. Bl-1, cv. C24 and cv. Ct-1 (AC D9UBG0) due to naturally occurring sequence variation in these strains. The sequence shown is from strain cv. Columbia.</text>
</comment>
<reference key="1">
    <citation type="journal article" date="2000" name="Proc. Natl. Acad. Sci. U.S.A.">
        <title>Cloning of the Arabidopsis RTM1 gene, which controls restriction of long-distance movement of tobacco etch virus.</title>
        <authorList>
            <person name="Chisholm S.T."/>
            <person name="Mahajan S.K."/>
            <person name="Whitham S.A."/>
            <person name="Yamamoto M.L."/>
            <person name="Carrington J.C."/>
        </authorList>
    </citation>
    <scope>NUCLEOTIDE SEQUENCE [GENOMIC DNA]</scope>
    <scope>FUNCTION</scope>
    <scope>MUTAGENESIS OF SER-56; GLY-132 AND ASP-139</scope>
    <scope>CHARACTERIZATION</scope>
    <scope>DISRUPTION PHENOTYPE</scope>
    <source>
        <strain>cv. Columbia</strain>
    </source>
</reference>
<reference key="2">
    <citation type="journal article" date="2010" name="Philos. Trans. R. Soc. Lond., B, Biol. Sci.">
        <title>Adaptation of tobacco etch potyvirus to a susceptible ecotype of Arabidopsis thaliana capacitates it for systemic infection of resistant ecotypes.</title>
        <authorList>
            <person name="Lalic J."/>
            <person name="Agudelo-Romero P."/>
            <person name="Carrasco P."/>
            <person name="Elena S.F."/>
        </authorList>
    </citation>
    <scope>NUCLEOTIDE SEQUENCE [GENOMIC DNA]</scope>
    <scope>FUNCTION</scope>
    <source>
        <strain>cv. Bla-1</strain>
        <strain>cv. Columbia</strain>
        <strain>cv. Di-2</strain>
        <strain>cv. Ga-0</strain>
        <strain>cv. Gy-0</strain>
        <strain>cv. Mrk-0</strain>
        <strain>cv. REN-1</strain>
        <strain>cv. Sorbo</strain>
        <strain>cv. St-0</strain>
        <strain>cv. Ta-0</strain>
        <strain>cv. Wassilewskija</strain>
        <strain>cv. Wt-1</strain>
    </source>
</reference>
<reference key="3">
    <citation type="journal article" date="2012" name="PLoS ONE">
        <title>The RTM resistance to potyviruses in Arabidopsis thaliana: natural variation of the RTM genes and evidence for the implication of additional genes.</title>
        <authorList>
            <person name="Cosson P."/>
            <person name="Schurdi-Levraud V."/>
            <person name="Le Q.H."/>
            <person name="Sicard O."/>
            <person name="Caballero M."/>
            <person name="Roux F."/>
            <person name="Le Gall O."/>
            <person name="Candresse T."/>
            <person name="Revers F."/>
        </authorList>
    </citation>
    <scope>NUCLEOTIDE SEQUENCE [GENOMIC DNA]</scope>
    <scope>FUNCTION</scope>
    <source>
        <strain>cv. Akita</strain>
        <strain>cv. Alc-0</strain>
        <strain>cv. Blh-1</strain>
        <strain>cv. Bur-0</strain>
        <strain>cv. Can-0</strain>
        <strain>cv. Cvi-0</strain>
        <strain>cv. Edi-0</strain>
        <strain>cv. Ge-0</strain>
        <strain>cv. Ge-1</strain>
        <strain>cv. Gre-0</strain>
        <strain>cv. Ita-0</strain>
        <strain>cv. Jea</strain>
        <strain>cv. Ll-0</strain>
        <strain>cv. Mh-1</strain>
        <strain>cv. Mt-0</strain>
        <strain>cv. N13 Konchezero</strain>
        <strain>cv. Nd-1</strain>
        <strain>cv. Oy-0</strain>
        <strain>cv. Pyl-1</strain>
        <strain>cv. Sakata</strain>
        <strain>cv. Sha</strain>
        <strain>cv. St-0</strain>
        <strain>cv. Stw-0</strain>
        <strain>cv. Tsu-0</strain>
        <strain>cv. Wassilewskija-2</strain>
        <strain>cv. Wu-0</strain>
        <tissue>Leaf</tissue>
    </source>
</reference>
<reference key="4">
    <citation type="journal article" date="2000" name="Nature">
        <title>Sequence and analysis of chromosome 1 of the plant Arabidopsis thaliana.</title>
        <authorList>
            <person name="Theologis A."/>
            <person name="Ecker J.R."/>
            <person name="Palm C.J."/>
            <person name="Federspiel N.A."/>
            <person name="Kaul S."/>
            <person name="White O."/>
            <person name="Alonso J."/>
            <person name="Altafi H."/>
            <person name="Araujo R."/>
            <person name="Bowman C.L."/>
            <person name="Brooks S.Y."/>
            <person name="Buehler E."/>
            <person name="Chan A."/>
            <person name="Chao Q."/>
            <person name="Chen H."/>
            <person name="Cheuk R.F."/>
            <person name="Chin C.W."/>
            <person name="Chung M.K."/>
            <person name="Conn L."/>
            <person name="Conway A.B."/>
            <person name="Conway A.R."/>
            <person name="Creasy T.H."/>
            <person name="Dewar K."/>
            <person name="Dunn P."/>
            <person name="Etgu P."/>
            <person name="Feldblyum T.V."/>
            <person name="Feng J.-D."/>
            <person name="Fong B."/>
            <person name="Fujii C.Y."/>
            <person name="Gill J.E."/>
            <person name="Goldsmith A.D."/>
            <person name="Haas B."/>
            <person name="Hansen N.F."/>
            <person name="Hughes B."/>
            <person name="Huizar L."/>
            <person name="Hunter J.L."/>
            <person name="Jenkins J."/>
            <person name="Johnson-Hopson C."/>
            <person name="Khan S."/>
            <person name="Khaykin E."/>
            <person name="Kim C.J."/>
            <person name="Koo H.L."/>
            <person name="Kremenetskaia I."/>
            <person name="Kurtz D.B."/>
            <person name="Kwan A."/>
            <person name="Lam B."/>
            <person name="Langin-Hooper S."/>
            <person name="Lee A."/>
            <person name="Lee J.M."/>
            <person name="Lenz C.A."/>
            <person name="Li J.H."/>
            <person name="Li Y.-P."/>
            <person name="Lin X."/>
            <person name="Liu S.X."/>
            <person name="Liu Z.A."/>
            <person name="Luros J.S."/>
            <person name="Maiti R."/>
            <person name="Marziali A."/>
            <person name="Militscher J."/>
            <person name="Miranda M."/>
            <person name="Nguyen M."/>
            <person name="Nierman W.C."/>
            <person name="Osborne B.I."/>
            <person name="Pai G."/>
            <person name="Peterson J."/>
            <person name="Pham P.K."/>
            <person name="Rizzo M."/>
            <person name="Rooney T."/>
            <person name="Rowley D."/>
            <person name="Sakano H."/>
            <person name="Salzberg S.L."/>
            <person name="Schwartz J.R."/>
            <person name="Shinn P."/>
            <person name="Southwick A.M."/>
            <person name="Sun H."/>
            <person name="Tallon L.J."/>
            <person name="Tambunga G."/>
            <person name="Toriumi M.J."/>
            <person name="Town C.D."/>
            <person name="Utterback T."/>
            <person name="Van Aken S."/>
            <person name="Vaysberg M."/>
            <person name="Vysotskaia V.S."/>
            <person name="Walker M."/>
            <person name="Wu D."/>
            <person name="Yu G."/>
            <person name="Fraser C.M."/>
            <person name="Venter J.C."/>
            <person name="Davis R.W."/>
        </authorList>
    </citation>
    <scope>NUCLEOTIDE SEQUENCE [LARGE SCALE GENOMIC DNA]</scope>
    <source>
        <strain>cv. Columbia</strain>
    </source>
</reference>
<reference key="5">
    <citation type="journal article" date="2017" name="Plant J.">
        <title>Araport11: a complete reannotation of the Arabidopsis thaliana reference genome.</title>
        <authorList>
            <person name="Cheng C.Y."/>
            <person name="Krishnakumar V."/>
            <person name="Chan A.P."/>
            <person name="Thibaud-Nissen F."/>
            <person name="Schobel S."/>
            <person name="Town C.D."/>
        </authorList>
    </citation>
    <scope>GENOME REANNOTATION</scope>
    <source>
        <strain>cv. Columbia</strain>
    </source>
</reference>
<reference key="6">
    <citation type="journal article" date="2003" name="Science">
        <title>Empirical analysis of transcriptional activity in the Arabidopsis genome.</title>
        <authorList>
            <person name="Yamada K."/>
            <person name="Lim J."/>
            <person name="Dale J.M."/>
            <person name="Chen H."/>
            <person name="Shinn P."/>
            <person name="Palm C.J."/>
            <person name="Southwick A.M."/>
            <person name="Wu H.C."/>
            <person name="Kim C.J."/>
            <person name="Nguyen M."/>
            <person name="Pham P.K."/>
            <person name="Cheuk R.F."/>
            <person name="Karlin-Newmann G."/>
            <person name="Liu S.X."/>
            <person name="Lam B."/>
            <person name="Sakano H."/>
            <person name="Wu T."/>
            <person name="Yu G."/>
            <person name="Miranda M."/>
            <person name="Quach H.L."/>
            <person name="Tripp M."/>
            <person name="Chang C.H."/>
            <person name="Lee J.M."/>
            <person name="Toriumi M.J."/>
            <person name="Chan M.M."/>
            <person name="Tang C.C."/>
            <person name="Onodera C.S."/>
            <person name="Deng J.M."/>
            <person name="Akiyama K."/>
            <person name="Ansari Y."/>
            <person name="Arakawa T."/>
            <person name="Banh J."/>
            <person name="Banno F."/>
            <person name="Bowser L."/>
            <person name="Brooks S.Y."/>
            <person name="Carninci P."/>
            <person name="Chao Q."/>
            <person name="Choy N."/>
            <person name="Enju A."/>
            <person name="Goldsmith A.D."/>
            <person name="Gurjal M."/>
            <person name="Hansen N.F."/>
            <person name="Hayashizaki Y."/>
            <person name="Johnson-Hopson C."/>
            <person name="Hsuan V.W."/>
            <person name="Iida K."/>
            <person name="Karnes M."/>
            <person name="Khan S."/>
            <person name="Koesema E."/>
            <person name="Ishida J."/>
            <person name="Jiang P.X."/>
            <person name="Jones T."/>
            <person name="Kawai J."/>
            <person name="Kamiya A."/>
            <person name="Meyers C."/>
            <person name="Nakajima M."/>
            <person name="Narusaka M."/>
            <person name="Seki M."/>
            <person name="Sakurai T."/>
            <person name="Satou M."/>
            <person name="Tamse R."/>
            <person name="Vaysberg M."/>
            <person name="Wallender E.K."/>
            <person name="Wong C."/>
            <person name="Yamamura Y."/>
            <person name="Yuan S."/>
            <person name="Shinozaki K."/>
            <person name="Davis R.W."/>
            <person name="Theologis A."/>
            <person name="Ecker J.R."/>
        </authorList>
    </citation>
    <scope>NUCLEOTIDE SEQUENCE [LARGE SCALE MRNA]</scope>
    <source>
        <strain>cv. Columbia</strain>
    </source>
</reference>
<reference key="7">
    <citation type="journal article" date="1998" name="Plant J.">
        <title>Identification and characterization of a locus (RTM1) that restricts long-distance movement of tobacco etch virus in Arabidopsis thaliana.</title>
        <authorList>
            <person name="Mahajan S.K."/>
            <person name="Chisholm S.T."/>
            <person name="Whitham S.A."/>
            <person name="Carrington J.C."/>
        </authorList>
    </citation>
    <scope>IDENTIFICATION</scope>
    <scope>FUNCTION</scope>
</reference>
<reference key="8">
    <citation type="journal article" date="1999" name="Proc. Natl. Acad. Sci. U.S.A.">
        <title>Selectable viruses and altered susceptibility mutants in Arabidopsis thaliana.</title>
        <authorList>
            <person name="Whitham S.A."/>
            <person name="Yamamoto M.L."/>
            <person name="Carrington J.C."/>
        </authorList>
    </citation>
    <scope>FUNCTION</scope>
    <scope>DISRUPTION PHENOTYPE</scope>
</reference>
<reference key="9">
    <citation type="journal article" date="2000" name="Plant Cell">
        <title>Arabidopsis RTM2 gene is necessary for specific restriction of tobacco etch virus and encodes an unusual small heat shock-like protein.</title>
        <authorList>
            <person name="Whitham S.A."/>
            <person name="Anderberg R.J."/>
            <person name="Chisholm S.T."/>
            <person name="Carrington J.C."/>
        </authorList>
    </citation>
    <scope>FUNCTION</scope>
</reference>
<reference key="10">
    <citation type="journal article" date="2001" name="Plant Physiol.">
        <title>Arabidopsis RTM1 and RTM2 genes function in phloem to restrict long-distance movement of tobacco etch virus.</title>
        <authorList>
            <person name="Chisholm S.T."/>
            <person name="Parra M.A."/>
            <person name="Anderberg R.J."/>
            <person name="Carrington J.C."/>
        </authorList>
    </citation>
    <scope>SUBCELLULAR LOCATION</scope>
    <scope>SUBUNIT</scope>
    <scope>TISSUE SPECIFICITY</scope>
    <source>
        <strain>cv. Columbia</strain>
    </source>
</reference>
<reference key="11">
    <citation type="journal article" date="2008" name="Plant Cell Physiol.">
        <title>Antagonistic jacalin-related lectins regulate the size of ER body-type beta-glucosidase complexes in Arabidopsis thaliana.</title>
        <authorList>
            <person name="Nagano A.J."/>
            <person name="Fukao Y."/>
            <person name="Fujiwara M."/>
            <person name="Nishimura M."/>
            <person name="Hara-Nishimura I."/>
        </authorList>
    </citation>
    <scope>GENE FAMILY</scope>
    <scope>NOMENCLATURE</scope>
</reference>
<reference key="12">
    <citation type="journal article" date="2010" name="Plant Physiol.">
        <title>RTM3, which controls long-distance movement of potyviruses, is a member of a new plant gene family encoding a meprin and TRAF homology domain-containing protein.</title>
        <authorList>
            <person name="Cosson P."/>
            <person name="Sofer L."/>
            <person name="Le Q.H."/>
            <person name="Leger V."/>
            <person name="Schurdi-Levraud V."/>
            <person name="Whitham S.A."/>
            <person name="Yamamoto M.L."/>
            <person name="Gopalan S."/>
            <person name="Le Gall O."/>
            <person name="Candresse T."/>
            <person name="Carrington J.C."/>
            <person name="Revers F."/>
        </authorList>
    </citation>
    <scope>INTERACTION WITH RTM3</scope>
</reference>
<reference key="13">
    <citation type="journal article" date="2014" name="Science">
        <title>Plant development. Arabidopsis NAC45/86 direct sieve element morphogenesis culminating in enucleation.</title>
        <authorList>
            <person name="Furuta K.M."/>
            <person name="Yadav S.R."/>
            <person name="Lehesranta S."/>
            <person name="Belevich I."/>
            <person name="Miyashima S."/>
            <person name="Heo J.O."/>
            <person name="Vaten A."/>
            <person name="Lindgren O."/>
            <person name="De Rybel B."/>
            <person name="Van Isterdael G."/>
            <person name="Somervuo P."/>
            <person name="Lichtenberger R."/>
            <person name="Rocha R."/>
            <person name="Thitamadee S."/>
            <person name="Taehtiharju S."/>
            <person name="Auvinen P."/>
            <person name="Beeckman T."/>
            <person name="Jokitalo E."/>
            <person name="Helariutta Y."/>
        </authorList>
    </citation>
    <scope>INDUCTION BY NAC045 AND NAC086</scope>
    <scope>TISSUE SPECIFICITY</scope>
</reference>